<evidence type="ECO:0000250" key="1"/>
<evidence type="ECO:0000255" key="2"/>
<keyword id="KW-0233">DNA recombination</keyword>
<keyword id="KW-0469">Meiosis</keyword>
<keyword id="KW-0496">Mitochondrion</keyword>
<keyword id="KW-1185">Reference proteome</keyword>
<keyword id="KW-0809">Transit peptide</keyword>
<reference key="1">
    <citation type="journal article" date="2004" name="Science">
        <title>The Ashbya gossypii genome as a tool for mapping the ancient Saccharomyces cerevisiae genome.</title>
        <authorList>
            <person name="Dietrich F.S."/>
            <person name="Voegeli S."/>
            <person name="Brachat S."/>
            <person name="Lerch A."/>
            <person name="Gates K."/>
            <person name="Steiner S."/>
            <person name="Mohr C."/>
            <person name="Poehlmann R."/>
            <person name="Luedi P."/>
            <person name="Choi S."/>
            <person name="Wing R.A."/>
            <person name="Flavier A."/>
            <person name="Gaffney T.D."/>
            <person name="Philippsen P."/>
        </authorList>
    </citation>
    <scope>NUCLEOTIDE SEQUENCE [LARGE SCALE GENOMIC DNA]</scope>
    <source>
        <strain>ATCC 10895 / CBS 109.51 / FGSC 9923 / NRRL Y-1056</strain>
    </source>
</reference>
<reference key="2">
    <citation type="journal article" date="2013" name="G3 (Bethesda)">
        <title>Genomes of Ashbya fungi isolated from insects reveal four mating-type loci, numerous translocations, lack of transposons, and distinct gene duplications.</title>
        <authorList>
            <person name="Dietrich F.S."/>
            <person name="Voegeli S."/>
            <person name="Kuo S."/>
            <person name="Philippsen P."/>
        </authorList>
    </citation>
    <scope>GENOME REANNOTATION</scope>
    <scope>SEQUENCE REVISION TO 436 AND C-TERMINUS</scope>
    <source>
        <strain>ATCC 10895 / CBS 109.51 / FGSC 9923 / NRRL Y-1056</strain>
    </source>
</reference>
<protein>
    <recommendedName>
        <fullName>Meiotic sister-chromatid recombination protein 6, mitochondrial</fullName>
    </recommendedName>
</protein>
<sequence length="670" mass="75301">MLFSRASKIRVSQLMRRLQSTAVGRAASRPEMLQLEAKLADVMKDKKDLGRVMAALRETVQGVVESGGLSDRTLLRSNSVTNDLGKLLEQSNKQLRGEIETDTVPPTPYEILVTLVDLKLARRTHYEQVMQYLLANGDAEAALGVWVKYLEFVAQMPQREGAEETYVMAYASIAYFFLGAADVDVLLQLLNREAGQYKDIPLFRIEQLQSQIGLSESNLTKVRENLAAIHKQLLVDKKGYFLDVILPECYYPLLHSYYKRYSDLEGLVDEDLAAGFMINFSRIGKHTLAMKCYNDAVKKAGGKPGVVLKNALLTVVARMGETAINRVNATRRIEAVWNSYFREDDVIDVSSYKALLNALIILKRFDKVQSVWELDIPEELKKDHTLLQTYLEGCAHRTNVSLPELLKQLPEAVTDVNLANAVLLKMANTSGSASMFDSFYDKTFKGPGSLRPTPLTLATRLLMGYATASDPAKFNFFDHTPIPRTMKNAVAEEFLKICSDSEAIKRFYESSKASLKLDVFSSRRVGKIIEASFNIGDWKTAEAIFKDHITTSNAKSQINVHTLLPLIAGFSNLILRNNEPSFLSKLDTYWQLASRVYKTIPFEFLNKTATAVASLCLKEAKLTDEHYNFINAVVMSELARSKKDHGYVLNARIYHSITKDQKISVPPELL</sequence>
<proteinExistence type="inferred from homology"/>
<dbReference type="EMBL" id="AE016817">
    <property type="protein sequence ID" value="AAS52303.2"/>
    <property type="molecule type" value="Genomic_DNA"/>
</dbReference>
<dbReference type="RefSeq" id="NP_984479.2">
    <property type="nucleotide sequence ID" value="NM_209832.2"/>
</dbReference>
<dbReference type="FunCoup" id="Q758Z4">
    <property type="interactions" value="74"/>
</dbReference>
<dbReference type="EnsemblFungi" id="AAS52303">
    <property type="protein sequence ID" value="AAS52303"/>
    <property type="gene ID" value="AGOS_ADR383C"/>
</dbReference>
<dbReference type="GeneID" id="4620644"/>
<dbReference type="KEGG" id="ago:AGOS_ADR383C"/>
<dbReference type="eggNOG" id="ENOG502QW5R">
    <property type="taxonomic scope" value="Eukaryota"/>
</dbReference>
<dbReference type="HOGENOM" id="CLU_398067_0_0_1"/>
<dbReference type="InParanoid" id="Q758Z4"/>
<dbReference type="OMA" id="WVKYLET"/>
<dbReference type="OrthoDB" id="4061195at2759"/>
<dbReference type="Proteomes" id="UP000000591">
    <property type="component" value="Chromosome IV"/>
</dbReference>
<dbReference type="GO" id="GO:0005739">
    <property type="term" value="C:mitochondrion"/>
    <property type="evidence" value="ECO:0007669"/>
    <property type="project" value="UniProtKB-SubCell"/>
</dbReference>
<dbReference type="GO" id="GO:0006310">
    <property type="term" value="P:DNA recombination"/>
    <property type="evidence" value="ECO:0007669"/>
    <property type="project" value="UniProtKB-KW"/>
</dbReference>
<dbReference type="GO" id="GO:0051321">
    <property type="term" value="P:meiotic cell cycle"/>
    <property type="evidence" value="ECO:0007669"/>
    <property type="project" value="UniProtKB-KW"/>
</dbReference>
<dbReference type="Gene3D" id="1.25.40.10">
    <property type="entry name" value="Tetratricopeptide repeat domain"/>
    <property type="match status" value="1"/>
</dbReference>
<dbReference type="InterPro" id="IPR011990">
    <property type="entry name" value="TPR-like_helical_dom_sf"/>
</dbReference>
<name>MSC6_EREGS</name>
<gene>
    <name type="primary">MSC6</name>
    <name type="ordered locus">ADR383C</name>
</gene>
<comment type="function">
    <text evidence="1">May be involved in the control of meiotic sister-chromatid recombination.</text>
</comment>
<comment type="subcellular location">
    <subcellularLocation>
        <location evidence="1">Mitochondrion</location>
    </subcellularLocation>
</comment>
<accession>Q758Z4</accession>
<organism>
    <name type="scientific">Eremothecium gossypii (strain ATCC 10895 / CBS 109.51 / FGSC 9923 / NRRL Y-1056)</name>
    <name type="common">Yeast</name>
    <name type="synonym">Ashbya gossypii</name>
    <dbReference type="NCBI Taxonomy" id="284811"/>
    <lineage>
        <taxon>Eukaryota</taxon>
        <taxon>Fungi</taxon>
        <taxon>Dikarya</taxon>
        <taxon>Ascomycota</taxon>
        <taxon>Saccharomycotina</taxon>
        <taxon>Saccharomycetes</taxon>
        <taxon>Saccharomycetales</taxon>
        <taxon>Saccharomycetaceae</taxon>
        <taxon>Eremothecium</taxon>
    </lineage>
</organism>
<feature type="transit peptide" description="Mitochondrion" evidence="2">
    <location>
        <begin position="1"/>
        <end position="27"/>
    </location>
</feature>
<feature type="chain" id="PRO_0000042819" description="Meiotic sister-chromatid recombination protein 6, mitochondrial">
    <location>
        <begin position="28"/>
        <end position="670"/>
    </location>
</feature>